<comment type="function">
    <text evidence="2">With S4 and S5 plays an important role in translational accuracy.</text>
</comment>
<comment type="function">
    <text evidence="2">Interacts with and stabilizes bases of the 16S rRNA that are involved in tRNA selection in the A site and with the mRNA backbone. Located at the interface of the 30S and 50S subunits, it traverses the body of the 30S subunit contacting proteins on the other side and probably holding the rRNA structure together. The combined cluster of proteins S8, S12 and S17 appears to hold together the shoulder and platform of the 30S subunit.</text>
</comment>
<comment type="subunit">
    <text evidence="2">Part of the 30S ribosomal subunit. Contacts proteins S8 and S17. May interact with IF1 in the 30S initiation complex.</text>
</comment>
<comment type="similarity">
    <text evidence="2">Belongs to the universal ribosomal protein uS12 family.</text>
</comment>
<reference key="1">
    <citation type="submission" date="2007-06" db="EMBL/GenBank/DDBJ databases">
        <title>Complete sequence of Marinomonas sp. MWYL1.</title>
        <authorList>
            <consortium name="US DOE Joint Genome Institute"/>
            <person name="Copeland A."/>
            <person name="Lucas S."/>
            <person name="Lapidus A."/>
            <person name="Barry K."/>
            <person name="Glavina del Rio T."/>
            <person name="Dalin E."/>
            <person name="Tice H."/>
            <person name="Pitluck S."/>
            <person name="Kiss H."/>
            <person name="Brettin T."/>
            <person name="Bruce D."/>
            <person name="Detter J.C."/>
            <person name="Han C."/>
            <person name="Schmutz J."/>
            <person name="Larimer F."/>
            <person name="Land M."/>
            <person name="Hauser L."/>
            <person name="Kyrpides N."/>
            <person name="Kim E."/>
            <person name="Johnston A.W.B."/>
            <person name="Todd J.D."/>
            <person name="Rogers R."/>
            <person name="Wexler M."/>
            <person name="Bond P.L."/>
            <person name="Li Y."/>
            <person name="Richardson P."/>
        </authorList>
    </citation>
    <scope>NUCLEOTIDE SEQUENCE [LARGE SCALE GENOMIC DNA]</scope>
    <source>
        <strain>MWYL1</strain>
    </source>
</reference>
<dbReference type="EMBL" id="CP000749">
    <property type="protein sequence ID" value="ABR73176.1"/>
    <property type="molecule type" value="Genomic_DNA"/>
</dbReference>
<dbReference type="SMR" id="A6W397"/>
<dbReference type="STRING" id="400668.Mmwyl1_4281"/>
<dbReference type="KEGG" id="mmw:Mmwyl1_4281"/>
<dbReference type="eggNOG" id="COG0048">
    <property type="taxonomic scope" value="Bacteria"/>
</dbReference>
<dbReference type="HOGENOM" id="CLU_104295_1_2_6"/>
<dbReference type="OrthoDB" id="9802366at2"/>
<dbReference type="GO" id="GO:0015935">
    <property type="term" value="C:small ribosomal subunit"/>
    <property type="evidence" value="ECO:0007669"/>
    <property type="project" value="InterPro"/>
</dbReference>
<dbReference type="GO" id="GO:0019843">
    <property type="term" value="F:rRNA binding"/>
    <property type="evidence" value="ECO:0007669"/>
    <property type="project" value="UniProtKB-UniRule"/>
</dbReference>
<dbReference type="GO" id="GO:0003735">
    <property type="term" value="F:structural constituent of ribosome"/>
    <property type="evidence" value="ECO:0007669"/>
    <property type="project" value="InterPro"/>
</dbReference>
<dbReference type="GO" id="GO:0000049">
    <property type="term" value="F:tRNA binding"/>
    <property type="evidence" value="ECO:0007669"/>
    <property type="project" value="UniProtKB-UniRule"/>
</dbReference>
<dbReference type="GO" id="GO:0006412">
    <property type="term" value="P:translation"/>
    <property type="evidence" value="ECO:0007669"/>
    <property type="project" value="UniProtKB-UniRule"/>
</dbReference>
<dbReference type="CDD" id="cd03368">
    <property type="entry name" value="Ribosomal_S12"/>
    <property type="match status" value="1"/>
</dbReference>
<dbReference type="FunFam" id="2.40.50.140:FF:000001">
    <property type="entry name" value="30S ribosomal protein S12"/>
    <property type="match status" value="1"/>
</dbReference>
<dbReference type="Gene3D" id="2.40.50.140">
    <property type="entry name" value="Nucleic acid-binding proteins"/>
    <property type="match status" value="1"/>
</dbReference>
<dbReference type="HAMAP" id="MF_00403_B">
    <property type="entry name" value="Ribosomal_uS12_B"/>
    <property type="match status" value="1"/>
</dbReference>
<dbReference type="InterPro" id="IPR012340">
    <property type="entry name" value="NA-bd_OB-fold"/>
</dbReference>
<dbReference type="InterPro" id="IPR006032">
    <property type="entry name" value="Ribosomal_uS12"/>
</dbReference>
<dbReference type="InterPro" id="IPR005679">
    <property type="entry name" value="Ribosomal_uS12_bac"/>
</dbReference>
<dbReference type="NCBIfam" id="TIGR00981">
    <property type="entry name" value="rpsL_bact"/>
    <property type="match status" value="1"/>
</dbReference>
<dbReference type="PANTHER" id="PTHR11652">
    <property type="entry name" value="30S RIBOSOMAL PROTEIN S12 FAMILY MEMBER"/>
    <property type="match status" value="1"/>
</dbReference>
<dbReference type="Pfam" id="PF00164">
    <property type="entry name" value="Ribosom_S12_S23"/>
    <property type="match status" value="1"/>
</dbReference>
<dbReference type="PIRSF" id="PIRSF002133">
    <property type="entry name" value="Ribosomal_S12/S23"/>
    <property type="match status" value="1"/>
</dbReference>
<dbReference type="PRINTS" id="PR01034">
    <property type="entry name" value="RIBOSOMALS12"/>
</dbReference>
<dbReference type="SUPFAM" id="SSF50249">
    <property type="entry name" value="Nucleic acid-binding proteins"/>
    <property type="match status" value="1"/>
</dbReference>
<dbReference type="PROSITE" id="PS00055">
    <property type="entry name" value="RIBOSOMAL_S12"/>
    <property type="match status" value="1"/>
</dbReference>
<keyword id="KW-0488">Methylation</keyword>
<keyword id="KW-0687">Ribonucleoprotein</keyword>
<keyword id="KW-0689">Ribosomal protein</keyword>
<keyword id="KW-0694">RNA-binding</keyword>
<keyword id="KW-0699">rRNA-binding</keyword>
<keyword id="KW-0820">tRNA-binding</keyword>
<name>RS12_MARMS</name>
<sequence length="124" mass="13866">MATVNQLVRKPRKRKVAKSDVPALQACPQRRGVCTRVYTTTPKKPNSALRKVCRVRLTNGFEVTSYIGGEGHNLQEHSVVLIRGGRVKDLPGVRYHTVRGSLDTSGVQNRKQGRSKYGTKRPKK</sequence>
<evidence type="ECO:0000250" key="1"/>
<evidence type="ECO:0000255" key="2">
    <source>
        <dbReference type="HAMAP-Rule" id="MF_00403"/>
    </source>
</evidence>
<evidence type="ECO:0000256" key="3">
    <source>
        <dbReference type="SAM" id="MobiDB-lite"/>
    </source>
</evidence>
<evidence type="ECO:0000305" key="4"/>
<protein>
    <recommendedName>
        <fullName evidence="2">Small ribosomal subunit protein uS12</fullName>
    </recommendedName>
    <alternativeName>
        <fullName evidence="4">30S ribosomal protein S12</fullName>
    </alternativeName>
</protein>
<feature type="chain" id="PRO_1000080401" description="Small ribosomal subunit protein uS12">
    <location>
        <begin position="1"/>
        <end position="124"/>
    </location>
</feature>
<feature type="region of interest" description="Disordered" evidence="3">
    <location>
        <begin position="1"/>
        <end position="22"/>
    </location>
</feature>
<feature type="region of interest" description="Disordered" evidence="3">
    <location>
        <begin position="99"/>
        <end position="124"/>
    </location>
</feature>
<feature type="compositionally biased region" description="Basic residues" evidence="3">
    <location>
        <begin position="111"/>
        <end position="124"/>
    </location>
</feature>
<feature type="modified residue" description="3-methylthioaspartic acid" evidence="1">
    <location>
        <position position="89"/>
    </location>
</feature>
<organism>
    <name type="scientific">Marinomonas sp. (strain MWYL1)</name>
    <dbReference type="NCBI Taxonomy" id="400668"/>
    <lineage>
        <taxon>Bacteria</taxon>
        <taxon>Pseudomonadati</taxon>
        <taxon>Pseudomonadota</taxon>
        <taxon>Gammaproteobacteria</taxon>
        <taxon>Oceanospirillales</taxon>
        <taxon>Oceanospirillaceae</taxon>
        <taxon>Marinomonas</taxon>
    </lineage>
</organism>
<accession>A6W397</accession>
<proteinExistence type="inferred from homology"/>
<gene>
    <name evidence="2" type="primary">rpsL</name>
    <name type="ordered locus">Mmwyl1_4281</name>
</gene>